<name>RS16_HAEDU</name>
<gene>
    <name evidence="1" type="primary">rpsP</name>
    <name type="ordered locus">HD_1949</name>
</gene>
<dbReference type="EMBL" id="AE017143">
    <property type="protein sequence ID" value="AAP96669.1"/>
    <property type="molecule type" value="Genomic_DNA"/>
</dbReference>
<dbReference type="RefSeq" id="WP_010945696.1">
    <property type="nucleotide sequence ID" value="NC_002940.2"/>
</dbReference>
<dbReference type="SMR" id="Q7VKG0"/>
<dbReference type="STRING" id="233412.HD_1949"/>
<dbReference type="GeneID" id="60733570"/>
<dbReference type="KEGG" id="hdu:HD_1949"/>
<dbReference type="eggNOG" id="COG0228">
    <property type="taxonomic scope" value="Bacteria"/>
</dbReference>
<dbReference type="HOGENOM" id="CLU_100590_5_1_6"/>
<dbReference type="OrthoDB" id="9807878at2"/>
<dbReference type="Proteomes" id="UP000001022">
    <property type="component" value="Chromosome"/>
</dbReference>
<dbReference type="GO" id="GO:0005737">
    <property type="term" value="C:cytoplasm"/>
    <property type="evidence" value="ECO:0007669"/>
    <property type="project" value="UniProtKB-ARBA"/>
</dbReference>
<dbReference type="GO" id="GO:0015935">
    <property type="term" value="C:small ribosomal subunit"/>
    <property type="evidence" value="ECO:0007669"/>
    <property type="project" value="TreeGrafter"/>
</dbReference>
<dbReference type="GO" id="GO:0003735">
    <property type="term" value="F:structural constituent of ribosome"/>
    <property type="evidence" value="ECO:0007669"/>
    <property type="project" value="InterPro"/>
</dbReference>
<dbReference type="GO" id="GO:0006412">
    <property type="term" value="P:translation"/>
    <property type="evidence" value="ECO:0007669"/>
    <property type="project" value="UniProtKB-UniRule"/>
</dbReference>
<dbReference type="FunFam" id="3.30.1320.10:FF:000001">
    <property type="entry name" value="30S ribosomal protein S16"/>
    <property type="match status" value="1"/>
</dbReference>
<dbReference type="Gene3D" id="3.30.1320.10">
    <property type="match status" value="1"/>
</dbReference>
<dbReference type="HAMAP" id="MF_00385">
    <property type="entry name" value="Ribosomal_bS16"/>
    <property type="match status" value="1"/>
</dbReference>
<dbReference type="InterPro" id="IPR000307">
    <property type="entry name" value="Ribosomal_bS16"/>
</dbReference>
<dbReference type="InterPro" id="IPR020592">
    <property type="entry name" value="Ribosomal_bS16_CS"/>
</dbReference>
<dbReference type="InterPro" id="IPR023803">
    <property type="entry name" value="Ribosomal_bS16_dom_sf"/>
</dbReference>
<dbReference type="NCBIfam" id="TIGR00002">
    <property type="entry name" value="S16"/>
    <property type="match status" value="1"/>
</dbReference>
<dbReference type="PANTHER" id="PTHR12919">
    <property type="entry name" value="30S RIBOSOMAL PROTEIN S16"/>
    <property type="match status" value="1"/>
</dbReference>
<dbReference type="PANTHER" id="PTHR12919:SF20">
    <property type="entry name" value="SMALL RIBOSOMAL SUBUNIT PROTEIN BS16M"/>
    <property type="match status" value="1"/>
</dbReference>
<dbReference type="Pfam" id="PF00886">
    <property type="entry name" value="Ribosomal_S16"/>
    <property type="match status" value="1"/>
</dbReference>
<dbReference type="SUPFAM" id="SSF54565">
    <property type="entry name" value="Ribosomal protein S16"/>
    <property type="match status" value="1"/>
</dbReference>
<dbReference type="PROSITE" id="PS00732">
    <property type="entry name" value="RIBOSOMAL_S16"/>
    <property type="match status" value="1"/>
</dbReference>
<keyword id="KW-1185">Reference proteome</keyword>
<keyword id="KW-0687">Ribonucleoprotein</keyword>
<keyword id="KW-0689">Ribosomal protein</keyword>
<proteinExistence type="inferred from homology"/>
<evidence type="ECO:0000255" key="1">
    <source>
        <dbReference type="HAMAP-Rule" id="MF_00385"/>
    </source>
</evidence>
<evidence type="ECO:0000305" key="2"/>
<feature type="chain" id="PRO_0000167191" description="Small ribosomal subunit protein bS16">
    <location>
        <begin position="1"/>
        <end position="82"/>
    </location>
</feature>
<protein>
    <recommendedName>
        <fullName evidence="1">Small ribosomal subunit protein bS16</fullName>
    </recommendedName>
    <alternativeName>
        <fullName evidence="2">30S ribosomal protein S16</fullName>
    </alternativeName>
</protein>
<reference key="1">
    <citation type="submission" date="2003-06" db="EMBL/GenBank/DDBJ databases">
        <title>The complete genome sequence of Haemophilus ducreyi.</title>
        <authorList>
            <person name="Munson R.S. Jr."/>
            <person name="Ray W.C."/>
            <person name="Mahairas G."/>
            <person name="Sabo P."/>
            <person name="Mungur R."/>
            <person name="Johnson L."/>
            <person name="Nguyen D."/>
            <person name="Wang J."/>
            <person name="Forst C."/>
            <person name="Hood L."/>
        </authorList>
    </citation>
    <scope>NUCLEOTIDE SEQUENCE [LARGE SCALE GENOMIC DNA]</scope>
    <source>
        <strain>35000HP / ATCC 700724</strain>
    </source>
</reference>
<organism>
    <name type="scientific">Haemophilus ducreyi (strain 35000HP / ATCC 700724)</name>
    <dbReference type="NCBI Taxonomy" id="233412"/>
    <lineage>
        <taxon>Bacteria</taxon>
        <taxon>Pseudomonadati</taxon>
        <taxon>Pseudomonadota</taxon>
        <taxon>Gammaproteobacteria</taxon>
        <taxon>Pasteurellales</taxon>
        <taxon>Pasteurellaceae</taxon>
        <taxon>Haemophilus</taxon>
    </lineage>
</organism>
<comment type="similarity">
    <text evidence="1">Belongs to the bacterial ribosomal protein bS16 family.</text>
</comment>
<accession>Q7VKG0</accession>
<sequence length="82" mass="9040">MVTIRLTRGGAKKRPFYQIVVADSRSPRDGRFIERIGFFNPLAAGQAERLRLDVAKVDAWVAKGAALSERVATLVKEARKAA</sequence>